<proteinExistence type="evidence at protein level"/>
<name>RN2B_LITPA</name>
<keyword id="KW-0878">Amphibian defense peptide</keyword>
<keyword id="KW-0044">Antibiotic</keyword>
<keyword id="KW-0929">Antimicrobial</keyword>
<keyword id="KW-0903">Direct protein sequencing</keyword>
<keyword id="KW-1015">Disulfide bond</keyword>
<keyword id="KW-0964">Secreted</keyword>
<organism>
    <name type="scientific">Lithobates palustris</name>
    <name type="common">Pickerel frog</name>
    <name type="synonym">Rana palustris</name>
    <dbReference type="NCBI Taxonomy" id="298395"/>
    <lineage>
        <taxon>Eukaryota</taxon>
        <taxon>Metazoa</taxon>
        <taxon>Chordata</taxon>
        <taxon>Craniata</taxon>
        <taxon>Vertebrata</taxon>
        <taxon>Euteleostomi</taxon>
        <taxon>Amphibia</taxon>
        <taxon>Batrachia</taxon>
        <taxon>Anura</taxon>
        <taxon>Neobatrachia</taxon>
        <taxon>Ranoidea</taxon>
        <taxon>Ranidae</taxon>
        <taxon>Lithobates</taxon>
    </lineage>
</organism>
<dbReference type="EMBL" id="FJ845481">
    <property type="protein sequence ID" value="ACZ44729.1"/>
    <property type="molecule type" value="Genomic_DNA"/>
</dbReference>
<dbReference type="EMBL" id="FJ845482">
    <property type="protein sequence ID" value="ACZ44730.1"/>
    <property type="molecule type" value="Genomic_DNA"/>
</dbReference>
<dbReference type="SMR" id="P84279"/>
<dbReference type="GO" id="GO:0005576">
    <property type="term" value="C:extracellular region"/>
    <property type="evidence" value="ECO:0000314"/>
    <property type="project" value="UniProtKB"/>
</dbReference>
<dbReference type="GO" id="GO:0050829">
    <property type="term" value="P:defense response to Gram-negative bacterium"/>
    <property type="evidence" value="ECO:0000314"/>
    <property type="project" value="UniProtKB"/>
</dbReference>
<dbReference type="InterPro" id="IPR012521">
    <property type="entry name" value="Antimicrobial_frog_2"/>
</dbReference>
<dbReference type="Pfam" id="PF08023">
    <property type="entry name" value="Antimicrobial_2"/>
    <property type="match status" value="1"/>
</dbReference>
<reference evidence="3" key="1">
    <citation type="journal article" date="2000" name="Biochim. Biophys. Acta">
        <title>Multiple antimicrobial peptides and peptides related to bradykinin and neuromedin N isolated from skin secretions of the pickerel frog, Rana palustris.</title>
        <authorList>
            <person name="Basir Y.J."/>
            <person name="Knoop F.C."/>
            <person name="Dulka J."/>
            <person name="Conlon J.M."/>
        </authorList>
    </citation>
    <scope>PROTEIN SEQUENCE</scope>
    <scope>FUNCTION</scope>
    <scope>SUBCELLULAR LOCATION</scope>
    <scope>TISSUE SPECIFICITY</scope>
    <scope>MASS SPECTROMETRY</scope>
    <scope>DISULFIDE BOND</scope>
    <source>
        <tissue evidence="1">Skin secretion</tissue>
    </source>
</reference>
<reference key="2">
    <citation type="journal article" date="2010" name="Immunogenetics">
        <title>A revised leopard frog phylogeny allows a more detailed examination of adaptive evolution at ranatuerin-2 antimicrobial peptide loci.</title>
        <authorList>
            <person name="Tennessen J.A."/>
            <person name="Blouin M.S."/>
        </authorList>
    </citation>
    <scope>NUCLEOTIDE SEQUENCE [GENOMIC DNA]</scope>
</reference>
<sequence>GFFSTVKNLATNVAGTVIDTLKCKVTGGCRS</sequence>
<feature type="peptide" id="PRO_0000044740" description="Ranatuerin-2PL">
    <location>
        <begin position="1" status="less than"/>
        <end position="31"/>
    </location>
</feature>
<feature type="disulfide bond" evidence="1">
    <location>
        <begin position="23"/>
        <end position="29"/>
    </location>
</feature>
<feature type="non-terminal residue">
    <location>
        <position position="1"/>
    </location>
</feature>
<protein>
    <recommendedName>
        <fullName evidence="3">Ranatuerin-2PL</fullName>
    </recommendedName>
    <alternativeName>
        <fullName evidence="2">Palustrin-2b</fullName>
    </alternativeName>
</protein>
<evidence type="ECO:0000269" key="1">
    <source>
    </source>
</evidence>
<evidence type="ECO:0000303" key="2">
    <source>
    </source>
</evidence>
<evidence type="ECO:0000305" key="3"/>
<accession>P84279</accession>
<accession>D3UA82</accession>
<comment type="function">
    <text evidence="1">Antimicrobial activity against Gram-negative bacterium E.coli.</text>
</comment>
<comment type="subcellular location">
    <subcellularLocation>
        <location evidence="1">Secreted</location>
    </subcellularLocation>
</comment>
<comment type="tissue specificity">
    <text evidence="1">Expressed by the skin glands.</text>
</comment>
<comment type="mass spectrometry"/>
<comment type="similarity">
    <text evidence="1">Belongs to the frog skin active peptide (FSAP) family. Ranatuerin subfamily.</text>
</comment>